<keyword id="KW-0489">Methyltransferase</keyword>
<keyword id="KW-0949">S-adenosyl-L-methionine</keyword>
<keyword id="KW-0808">Transferase</keyword>
<keyword id="KW-0819">tRNA processing</keyword>
<organism>
    <name type="scientific">Shigella flexneri serotype 5b (strain 8401)</name>
    <dbReference type="NCBI Taxonomy" id="373384"/>
    <lineage>
        <taxon>Bacteria</taxon>
        <taxon>Pseudomonadati</taxon>
        <taxon>Pseudomonadota</taxon>
        <taxon>Gammaproteobacteria</taxon>
        <taxon>Enterobacterales</taxon>
        <taxon>Enterobacteriaceae</taxon>
        <taxon>Shigella</taxon>
    </lineage>
</organism>
<dbReference type="EC" id="2.1.1.-" evidence="1"/>
<dbReference type="EC" id="2.1.1.35" evidence="1"/>
<dbReference type="EMBL" id="CP000266">
    <property type="protein sequence ID" value="ABF06039.1"/>
    <property type="molecule type" value="Genomic_DNA"/>
</dbReference>
<dbReference type="RefSeq" id="WP_000187011.1">
    <property type="nucleotide sequence ID" value="NC_008258.1"/>
</dbReference>
<dbReference type="SMR" id="Q0SY26"/>
<dbReference type="KEGG" id="sfv:SFV_4038"/>
<dbReference type="HOGENOM" id="CLU_043022_0_0_6"/>
<dbReference type="Proteomes" id="UP000000659">
    <property type="component" value="Chromosome"/>
</dbReference>
<dbReference type="GO" id="GO:0005829">
    <property type="term" value="C:cytosol"/>
    <property type="evidence" value="ECO:0007669"/>
    <property type="project" value="TreeGrafter"/>
</dbReference>
<dbReference type="GO" id="GO:0019843">
    <property type="term" value="F:rRNA binding"/>
    <property type="evidence" value="ECO:0007669"/>
    <property type="project" value="TreeGrafter"/>
</dbReference>
<dbReference type="GO" id="GO:0030697">
    <property type="term" value="F:tRNA (uracil(54)-C5)-methyltransferase activity, S-adenosyl methionine-dependent"/>
    <property type="evidence" value="ECO:0007669"/>
    <property type="project" value="UniProtKB-UniRule"/>
</dbReference>
<dbReference type="GO" id="GO:0000049">
    <property type="term" value="F:tRNA binding"/>
    <property type="evidence" value="ECO:0007669"/>
    <property type="project" value="TreeGrafter"/>
</dbReference>
<dbReference type="GO" id="GO:0030488">
    <property type="term" value="P:tRNA methylation"/>
    <property type="evidence" value="ECO:0007669"/>
    <property type="project" value="UniProtKB-UniRule"/>
</dbReference>
<dbReference type="CDD" id="cd02440">
    <property type="entry name" value="AdoMet_MTases"/>
    <property type="match status" value="1"/>
</dbReference>
<dbReference type="FunFam" id="2.40.50.1070:FF:000001">
    <property type="entry name" value="tRNA/tmRNA (uracil-C(5))-methyltransferase"/>
    <property type="match status" value="1"/>
</dbReference>
<dbReference type="FunFam" id="3.40.50.150:FF:000012">
    <property type="entry name" value="tRNA/tmRNA (uracil-C(5))-methyltransferase"/>
    <property type="match status" value="1"/>
</dbReference>
<dbReference type="Gene3D" id="2.40.50.1070">
    <property type="match status" value="1"/>
</dbReference>
<dbReference type="Gene3D" id="3.40.50.150">
    <property type="entry name" value="Vaccinia Virus protein VP39"/>
    <property type="match status" value="1"/>
</dbReference>
<dbReference type="HAMAP" id="MF_01011">
    <property type="entry name" value="RNA_methyltr_TrmA"/>
    <property type="match status" value="1"/>
</dbReference>
<dbReference type="InterPro" id="IPR030390">
    <property type="entry name" value="MeTrfase_TrmA_AS"/>
</dbReference>
<dbReference type="InterPro" id="IPR030391">
    <property type="entry name" value="MeTrfase_TrmA_CS"/>
</dbReference>
<dbReference type="InterPro" id="IPR029063">
    <property type="entry name" value="SAM-dependent_MTases_sf"/>
</dbReference>
<dbReference type="InterPro" id="IPR011869">
    <property type="entry name" value="TrmA_MeTrfase"/>
</dbReference>
<dbReference type="InterPro" id="IPR010280">
    <property type="entry name" value="U5_MeTrfase_fam"/>
</dbReference>
<dbReference type="NCBIfam" id="TIGR02143">
    <property type="entry name" value="trmA_only"/>
    <property type="match status" value="1"/>
</dbReference>
<dbReference type="PANTHER" id="PTHR47790">
    <property type="entry name" value="TRNA/TMRNA (URACIL-C(5))-METHYLTRANSFERASE"/>
    <property type="match status" value="1"/>
</dbReference>
<dbReference type="PANTHER" id="PTHR47790:SF2">
    <property type="entry name" value="TRNA_TMRNA (URACIL-C(5))-METHYLTRANSFERASE"/>
    <property type="match status" value="1"/>
</dbReference>
<dbReference type="Pfam" id="PF05958">
    <property type="entry name" value="tRNA_U5-meth_tr"/>
    <property type="match status" value="1"/>
</dbReference>
<dbReference type="SUPFAM" id="SSF53335">
    <property type="entry name" value="S-adenosyl-L-methionine-dependent methyltransferases"/>
    <property type="match status" value="1"/>
</dbReference>
<dbReference type="PROSITE" id="PS51687">
    <property type="entry name" value="SAM_MT_RNA_M5U"/>
    <property type="match status" value="1"/>
</dbReference>
<dbReference type="PROSITE" id="PS01230">
    <property type="entry name" value="TRMA_1"/>
    <property type="match status" value="1"/>
</dbReference>
<dbReference type="PROSITE" id="PS01231">
    <property type="entry name" value="TRMA_2"/>
    <property type="match status" value="1"/>
</dbReference>
<name>TRMA_SHIF8</name>
<reference key="1">
    <citation type="journal article" date="2006" name="BMC Genomics">
        <title>Complete genome sequence of Shigella flexneri 5b and comparison with Shigella flexneri 2a.</title>
        <authorList>
            <person name="Nie H."/>
            <person name="Yang F."/>
            <person name="Zhang X."/>
            <person name="Yang J."/>
            <person name="Chen L."/>
            <person name="Wang J."/>
            <person name="Xiong Z."/>
            <person name="Peng J."/>
            <person name="Sun L."/>
            <person name="Dong J."/>
            <person name="Xue Y."/>
            <person name="Xu X."/>
            <person name="Chen S."/>
            <person name="Yao Z."/>
            <person name="Shen Y."/>
            <person name="Jin Q."/>
        </authorList>
    </citation>
    <scope>NUCLEOTIDE SEQUENCE [LARGE SCALE GENOMIC DNA]</scope>
    <source>
        <strain>8401</strain>
    </source>
</reference>
<accession>Q0SY26</accession>
<protein>
    <recommendedName>
        <fullName evidence="1">tRNA/tmRNA (uracil-C(5))-methyltransferase</fullName>
        <ecNumber evidence="1">2.1.1.-</ecNumber>
        <ecNumber evidence="1">2.1.1.35</ecNumber>
    </recommendedName>
    <alternativeName>
        <fullName evidence="1">tRNA (uracil(54)-C(5))-methyltransferase</fullName>
    </alternativeName>
    <alternativeName>
        <fullName evidence="1">tRNA(m5U54)-methyltransferase</fullName>
        <shortName evidence="1">RUMT</shortName>
    </alternativeName>
    <alternativeName>
        <fullName evidence="1">tmRNA (uracil(341)-C(5))-methyltransferase</fullName>
    </alternativeName>
</protein>
<gene>
    <name evidence="1" type="primary">trmA</name>
    <name type="ordered locus">SFV_4038</name>
</gene>
<proteinExistence type="inferred from homology"/>
<comment type="function">
    <text evidence="1">Dual-specificity methyltransferase that catalyzes the formation of 5-methyluridine at position 54 (m5U54) in all tRNAs, and that of position 341 (m5U341) in tmRNA (transfer-mRNA).</text>
</comment>
<comment type="catalytic activity">
    <reaction evidence="1">
        <text>uridine(54) in tRNA + S-adenosyl-L-methionine = 5-methyluridine(54) in tRNA + S-adenosyl-L-homocysteine + H(+)</text>
        <dbReference type="Rhea" id="RHEA:42712"/>
        <dbReference type="Rhea" id="RHEA-COMP:10167"/>
        <dbReference type="Rhea" id="RHEA-COMP:10193"/>
        <dbReference type="ChEBI" id="CHEBI:15378"/>
        <dbReference type="ChEBI" id="CHEBI:57856"/>
        <dbReference type="ChEBI" id="CHEBI:59789"/>
        <dbReference type="ChEBI" id="CHEBI:65315"/>
        <dbReference type="ChEBI" id="CHEBI:74447"/>
        <dbReference type="EC" id="2.1.1.35"/>
    </reaction>
</comment>
<comment type="catalytic activity">
    <reaction evidence="1">
        <text>uridine(341) in tmRNA + S-adenosyl-L-methionine = 5-methyluridine(341) in tmRNA + S-adenosyl-L-homocysteine + H(+)</text>
        <dbReference type="Rhea" id="RHEA:43612"/>
        <dbReference type="Rhea" id="RHEA-COMP:10630"/>
        <dbReference type="Rhea" id="RHEA-COMP:10631"/>
        <dbReference type="ChEBI" id="CHEBI:15378"/>
        <dbReference type="ChEBI" id="CHEBI:57856"/>
        <dbReference type="ChEBI" id="CHEBI:59789"/>
        <dbReference type="ChEBI" id="CHEBI:65315"/>
        <dbReference type="ChEBI" id="CHEBI:74447"/>
    </reaction>
</comment>
<comment type="similarity">
    <text evidence="1">Belongs to the class I-like SAM-binding methyltransferase superfamily. RNA M5U methyltransferase family. TrmA subfamily.</text>
</comment>
<evidence type="ECO:0000255" key="1">
    <source>
        <dbReference type="HAMAP-Rule" id="MF_01011"/>
    </source>
</evidence>
<sequence>MTPEHLPTEQYEAQLAEKVVRLQSMMAPFSDLVPEVFRSPVSHYRMRAEFRIWHDGDDLYHIIFDQQTKSRIRVDSFPAASELINQLMTAMIAGVRNNPVLRHKLFQIDYLTTLSNQAVVSLLYHKKLDDEWRQEAEALRDALRAQNLNVHLIGRATKTKIALDQDYIDERLPVAGKEMIYRQVENSFTQPNAAMNIQMLEWALDVTKGSKGDLLELYCGNGNFSLALARNFDRVLATEIAKPSVAAAQYNITANHIDNVQIIRMAAEEFTQAMNGVREFNRLQGIDLKSYQFETIFVDPPRSGLDSETEKMVQAYPRILYISCNPETLCKNLETLSQTHKVERLALFDQFPYTHHMECGVLLTAK</sequence>
<feature type="chain" id="PRO_0000281466" description="tRNA/tmRNA (uracil-C(5))-methyltransferase">
    <location>
        <begin position="1"/>
        <end position="366"/>
    </location>
</feature>
<feature type="active site" description="Nucleophile" evidence="1">
    <location>
        <position position="324"/>
    </location>
</feature>
<feature type="active site" description="Proton acceptor" evidence="1">
    <location>
        <position position="358"/>
    </location>
</feature>
<feature type="binding site" evidence="1">
    <location>
        <position position="190"/>
    </location>
    <ligand>
        <name>S-adenosyl-L-methionine</name>
        <dbReference type="ChEBI" id="CHEBI:59789"/>
    </ligand>
</feature>
<feature type="binding site" evidence="1">
    <location>
        <position position="218"/>
    </location>
    <ligand>
        <name>S-adenosyl-L-methionine</name>
        <dbReference type="ChEBI" id="CHEBI:59789"/>
    </ligand>
</feature>
<feature type="binding site" evidence="1">
    <location>
        <position position="223"/>
    </location>
    <ligand>
        <name>S-adenosyl-L-methionine</name>
        <dbReference type="ChEBI" id="CHEBI:59789"/>
    </ligand>
</feature>
<feature type="binding site" evidence="1">
    <location>
        <position position="239"/>
    </location>
    <ligand>
        <name>S-adenosyl-L-methionine</name>
        <dbReference type="ChEBI" id="CHEBI:59789"/>
    </ligand>
</feature>
<feature type="binding site" evidence="1">
    <location>
        <position position="299"/>
    </location>
    <ligand>
        <name>S-adenosyl-L-methionine</name>
        <dbReference type="ChEBI" id="CHEBI:59789"/>
    </ligand>
</feature>